<organismHost>
    <name type="scientific">Vertebrata</name>
    <dbReference type="NCBI Taxonomy" id="7742"/>
</organismHost>
<feature type="chain" id="PRO_0000099224" description="Protein A6 homolog">
    <location>
        <begin position="1"/>
        <end position="374"/>
    </location>
</feature>
<feature type="helix" evidence="3">
    <location>
        <begin position="131"/>
        <end position="145"/>
    </location>
</feature>
<feature type="helix" evidence="3">
    <location>
        <begin position="158"/>
        <end position="162"/>
    </location>
</feature>
<feature type="helix" evidence="3">
    <location>
        <begin position="164"/>
        <end position="176"/>
    </location>
</feature>
<feature type="helix" evidence="3">
    <location>
        <begin position="180"/>
        <end position="188"/>
    </location>
</feature>
<feature type="helix" evidence="3">
    <location>
        <begin position="190"/>
        <end position="194"/>
    </location>
</feature>
<feature type="helix" evidence="3">
    <location>
        <begin position="196"/>
        <end position="206"/>
    </location>
</feature>
<feature type="helix" evidence="3">
    <location>
        <begin position="210"/>
        <end position="220"/>
    </location>
</feature>
<feature type="strand" evidence="3">
    <location>
        <begin position="223"/>
        <end position="225"/>
    </location>
</feature>
<feature type="helix" evidence="3">
    <location>
        <begin position="236"/>
        <end position="242"/>
    </location>
</feature>
<feature type="helix" evidence="3">
    <location>
        <begin position="243"/>
        <end position="245"/>
    </location>
</feature>
<feature type="helix" evidence="3">
    <location>
        <begin position="247"/>
        <end position="252"/>
    </location>
</feature>
<feature type="helix" evidence="3">
    <location>
        <begin position="256"/>
        <end position="276"/>
    </location>
</feature>
<feature type="helix" evidence="3">
    <location>
        <begin position="278"/>
        <end position="294"/>
    </location>
</feature>
<feature type="helix" evidence="3">
    <location>
        <begin position="297"/>
        <end position="302"/>
    </location>
</feature>
<feature type="turn" evidence="3">
    <location>
        <begin position="303"/>
        <end position="306"/>
    </location>
</feature>
<feature type="helix" evidence="3">
    <location>
        <begin position="308"/>
        <end position="317"/>
    </location>
</feature>
<feature type="helix" evidence="3">
    <location>
        <begin position="319"/>
        <end position="347"/>
    </location>
</feature>
<feature type="strand" evidence="3">
    <location>
        <begin position="350"/>
        <end position="352"/>
    </location>
</feature>
<feature type="helix" evidence="3">
    <location>
        <begin position="359"/>
        <end position="369"/>
    </location>
</feature>
<feature type="helix" evidence="3">
    <location>
        <begin position="371"/>
        <end position="373"/>
    </location>
</feature>
<protein>
    <recommendedName>
        <fullName>Protein A6 homolog</fullName>
    </recommendedName>
</protein>
<name>A6_FOWPN</name>
<keyword id="KW-0002">3D-structure</keyword>
<keyword id="KW-1185">Reference proteome</keyword>
<keyword id="KW-0946">Virion</keyword>
<comment type="function">
    <text evidence="1">Plays an essential role in immature virion (IV) to mature virion (MV) transition.</text>
</comment>
<comment type="subcellular location">
    <subcellularLocation>
        <location evidence="1">Virion</location>
    </subcellularLocation>
    <text evidence="1">Localizes to the virion core.</text>
</comment>
<comment type="similarity">
    <text evidence="2">Belongs to the chordopoxvirinae A6 family.</text>
</comment>
<gene>
    <name type="ordered locus">FPV170</name>
</gene>
<organism>
    <name type="scientific">Fowlpox virus (strain NVSL)</name>
    <name type="common">FPV</name>
    <dbReference type="NCBI Taxonomy" id="928301"/>
    <lineage>
        <taxon>Viruses</taxon>
        <taxon>Varidnaviria</taxon>
        <taxon>Bamfordvirae</taxon>
        <taxon>Nucleocytoviricota</taxon>
        <taxon>Pokkesviricetes</taxon>
        <taxon>Chitovirales</taxon>
        <taxon>Poxviridae</taxon>
        <taxon>Chordopoxvirinae</taxon>
        <taxon>Avipoxvirus</taxon>
        <taxon>Fowlpox virus</taxon>
    </lineage>
</organism>
<accession>Q9J563</accession>
<evidence type="ECO:0000250" key="1"/>
<evidence type="ECO:0000305" key="2"/>
<evidence type="ECO:0007829" key="3">
    <source>
        <dbReference type="PDB" id="6BR9"/>
    </source>
</evidence>
<reference key="1">
    <citation type="journal article" date="2000" name="J. Virol.">
        <title>The genome of fowlpox virus.</title>
        <authorList>
            <person name="Afonso C.L."/>
            <person name="Tulman E.R."/>
            <person name="Lu Z."/>
            <person name="Zsak L."/>
            <person name="Kutish G.F."/>
            <person name="Rock D.L."/>
        </authorList>
    </citation>
    <scope>NUCLEOTIDE SEQUENCE [LARGE SCALE GENOMIC DNA]</scope>
</reference>
<proteinExistence type="evidence at protein level"/>
<dbReference type="EMBL" id="AF198100">
    <property type="protein sequence ID" value="AAF44514.1"/>
    <property type="molecule type" value="Genomic_DNA"/>
</dbReference>
<dbReference type="RefSeq" id="NP_039133.1">
    <property type="nucleotide sequence ID" value="NC_002188.1"/>
</dbReference>
<dbReference type="PDB" id="6BR8">
    <property type="method" value="X-ray"/>
    <property type="resolution" value="2.30 A"/>
    <property type="chains" value="A/B=124-374"/>
</dbReference>
<dbReference type="PDB" id="6BR9">
    <property type="method" value="X-ray"/>
    <property type="resolution" value="2.20 A"/>
    <property type="chains" value="A=119-374"/>
</dbReference>
<dbReference type="PDBsum" id="6BR8"/>
<dbReference type="PDBsum" id="6BR9"/>
<dbReference type="SMR" id="Q9J563"/>
<dbReference type="GeneID" id="1486718"/>
<dbReference type="KEGG" id="vg:1486718"/>
<dbReference type="Proteomes" id="UP000008597">
    <property type="component" value="Segment"/>
</dbReference>
<dbReference type="GO" id="GO:0044423">
    <property type="term" value="C:virion component"/>
    <property type="evidence" value="ECO:0007669"/>
    <property type="project" value="UniProtKB-KW"/>
</dbReference>
<dbReference type="InterPro" id="IPR007008">
    <property type="entry name" value="Poxvirus_A6"/>
</dbReference>
<dbReference type="Pfam" id="PF04924">
    <property type="entry name" value="Pox_A6"/>
    <property type="match status" value="1"/>
</dbReference>
<sequence length="374" mass="43748">MEKFRNAFIEFYELSKKYLENSTGQKVYEVNYDNDIDSFLTVFPILESKIGGDINCAMSDETVILAMQQVEFKMFTFWYMRSAANVKSMLNKITDKETKEQFIRIFKDMLVYAKVITSINNMYSNMKKDTNEIVQDLKKILGIVSLIKSANNEHQAYKILMENNSFIIRTINKVLADSNYIIKIIALFNTDVVSDKIKLEEYKDVFSFSKENVIFGIKCFCDITIDGIDQINNKYVSFFKKVLPNIILFQTSCVKTTQFVNIFSKLSSIVYSEILTNERLHVLFSEIMASFKTKVSVEDLKKRKVNNIQGLISEISNNREMYKNIFVEEYEKHKTTLISIVQCITDNYNINYKENAVDIEFIFDFIQEHYISKL</sequence>